<evidence type="ECO:0000255" key="1">
    <source>
        <dbReference type="HAMAP-Rule" id="MF_00530"/>
    </source>
</evidence>
<accession>Q03QY9</accession>
<proteinExistence type="inferred from homology"/>
<keyword id="KW-0066">ATP synthesis</keyword>
<keyword id="KW-1003">Cell membrane</keyword>
<keyword id="KW-0139">CF(1)</keyword>
<keyword id="KW-0375">Hydrogen ion transport</keyword>
<keyword id="KW-0406">Ion transport</keyword>
<keyword id="KW-0472">Membrane</keyword>
<keyword id="KW-1185">Reference proteome</keyword>
<keyword id="KW-0813">Transport</keyword>
<gene>
    <name evidence="1" type="primary">atpC</name>
    <name type="ordered locus">LVIS_1278</name>
</gene>
<reference key="1">
    <citation type="journal article" date="2006" name="Proc. Natl. Acad. Sci. U.S.A.">
        <title>Comparative genomics of the lactic acid bacteria.</title>
        <authorList>
            <person name="Makarova K.S."/>
            <person name="Slesarev A."/>
            <person name="Wolf Y.I."/>
            <person name="Sorokin A."/>
            <person name="Mirkin B."/>
            <person name="Koonin E.V."/>
            <person name="Pavlov A."/>
            <person name="Pavlova N."/>
            <person name="Karamychev V."/>
            <person name="Polouchine N."/>
            <person name="Shakhova V."/>
            <person name="Grigoriev I."/>
            <person name="Lou Y."/>
            <person name="Rohksar D."/>
            <person name="Lucas S."/>
            <person name="Huang K."/>
            <person name="Goodstein D.M."/>
            <person name="Hawkins T."/>
            <person name="Plengvidhya V."/>
            <person name="Welker D."/>
            <person name="Hughes J."/>
            <person name="Goh Y."/>
            <person name="Benson A."/>
            <person name="Baldwin K."/>
            <person name="Lee J.-H."/>
            <person name="Diaz-Muniz I."/>
            <person name="Dosti B."/>
            <person name="Smeianov V."/>
            <person name="Wechter W."/>
            <person name="Barabote R."/>
            <person name="Lorca G."/>
            <person name="Altermann E."/>
            <person name="Barrangou R."/>
            <person name="Ganesan B."/>
            <person name="Xie Y."/>
            <person name="Rawsthorne H."/>
            <person name="Tamir D."/>
            <person name="Parker C."/>
            <person name="Breidt F."/>
            <person name="Broadbent J.R."/>
            <person name="Hutkins R."/>
            <person name="O'Sullivan D."/>
            <person name="Steele J."/>
            <person name="Unlu G."/>
            <person name="Saier M.H. Jr."/>
            <person name="Klaenhammer T."/>
            <person name="Richardson P."/>
            <person name="Kozyavkin S."/>
            <person name="Weimer B.C."/>
            <person name="Mills D.A."/>
        </authorList>
    </citation>
    <scope>NUCLEOTIDE SEQUENCE [LARGE SCALE GENOMIC DNA]</scope>
    <source>
        <strain>ATCC 367 / BCRC 12310 / CIP 105137 / JCM 1170 / LMG 11437 / NCIMB 947 / NCTC 947</strain>
    </source>
</reference>
<organism>
    <name type="scientific">Levilactobacillus brevis (strain ATCC 367 / BCRC 12310 / CIP 105137 / JCM 1170 / LMG 11437 / NCIMB 947 / NCTC 947)</name>
    <name type="common">Lactobacillus brevis</name>
    <dbReference type="NCBI Taxonomy" id="387344"/>
    <lineage>
        <taxon>Bacteria</taxon>
        <taxon>Bacillati</taxon>
        <taxon>Bacillota</taxon>
        <taxon>Bacilli</taxon>
        <taxon>Lactobacillales</taxon>
        <taxon>Lactobacillaceae</taxon>
        <taxon>Levilactobacillus</taxon>
    </lineage>
</organism>
<sequence>MADNQSVLSVSIVTPDGQVYNEQGDLLIVTTKSGQLGIMPNHVPVIASLEVEEARIKRGENEDEIAVNGGFLEFSGNVATIVADSAERQDDIDVNRAENARERAEATIKKAQEAHDADTLARAEVALRRAVNRINVAKH</sequence>
<dbReference type="EMBL" id="CP000416">
    <property type="protein sequence ID" value="ABJ64383.1"/>
    <property type="molecule type" value="Genomic_DNA"/>
</dbReference>
<dbReference type="RefSeq" id="WP_011668147.1">
    <property type="nucleotide sequence ID" value="NC_008497.1"/>
</dbReference>
<dbReference type="SMR" id="Q03QY9"/>
<dbReference type="STRING" id="387344.LVIS_1278"/>
<dbReference type="KEGG" id="lbr:LVIS_1278"/>
<dbReference type="eggNOG" id="COG0355">
    <property type="taxonomic scope" value="Bacteria"/>
</dbReference>
<dbReference type="HOGENOM" id="CLU_084338_1_0_9"/>
<dbReference type="Proteomes" id="UP000001652">
    <property type="component" value="Chromosome"/>
</dbReference>
<dbReference type="GO" id="GO:0005886">
    <property type="term" value="C:plasma membrane"/>
    <property type="evidence" value="ECO:0007669"/>
    <property type="project" value="UniProtKB-SubCell"/>
</dbReference>
<dbReference type="GO" id="GO:0045259">
    <property type="term" value="C:proton-transporting ATP synthase complex"/>
    <property type="evidence" value="ECO:0007669"/>
    <property type="project" value="UniProtKB-KW"/>
</dbReference>
<dbReference type="GO" id="GO:0005524">
    <property type="term" value="F:ATP binding"/>
    <property type="evidence" value="ECO:0007669"/>
    <property type="project" value="UniProtKB-UniRule"/>
</dbReference>
<dbReference type="GO" id="GO:0046933">
    <property type="term" value="F:proton-transporting ATP synthase activity, rotational mechanism"/>
    <property type="evidence" value="ECO:0007669"/>
    <property type="project" value="UniProtKB-UniRule"/>
</dbReference>
<dbReference type="CDD" id="cd12152">
    <property type="entry name" value="F1-ATPase_delta"/>
    <property type="match status" value="1"/>
</dbReference>
<dbReference type="Gene3D" id="1.20.5.440">
    <property type="entry name" value="ATP synthase delta/epsilon subunit, C-terminal domain"/>
    <property type="match status" value="1"/>
</dbReference>
<dbReference type="Gene3D" id="2.60.15.10">
    <property type="entry name" value="F0F1 ATP synthase delta/epsilon subunit, N-terminal"/>
    <property type="match status" value="1"/>
</dbReference>
<dbReference type="HAMAP" id="MF_00530">
    <property type="entry name" value="ATP_synth_epsil_bac"/>
    <property type="match status" value="1"/>
</dbReference>
<dbReference type="InterPro" id="IPR036794">
    <property type="entry name" value="ATP_F1_dsu/esu_C_sf"/>
</dbReference>
<dbReference type="InterPro" id="IPR001469">
    <property type="entry name" value="ATP_synth_F1_dsu/esu"/>
</dbReference>
<dbReference type="InterPro" id="IPR020546">
    <property type="entry name" value="ATP_synth_F1_dsu/esu_N"/>
</dbReference>
<dbReference type="InterPro" id="IPR020547">
    <property type="entry name" value="ATP_synth_F1_esu_C"/>
</dbReference>
<dbReference type="InterPro" id="IPR036771">
    <property type="entry name" value="ATPsynth_dsu/esu_N"/>
</dbReference>
<dbReference type="NCBIfam" id="TIGR01216">
    <property type="entry name" value="ATP_synt_epsi"/>
    <property type="match status" value="1"/>
</dbReference>
<dbReference type="NCBIfam" id="NF001846">
    <property type="entry name" value="PRK00571.1-3"/>
    <property type="match status" value="1"/>
</dbReference>
<dbReference type="PANTHER" id="PTHR13822">
    <property type="entry name" value="ATP SYNTHASE DELTA/EPSILON CHAIN"/>
    <property type="match status" value="1"/>
</dbReference>
<dbReference type="PANTHER" id="PTHR13822:SF10">
    <property type="entry name" value="ATP SYNTHASE EPSILON CHAIN, CHLOROPLASTIC"/>
    <property type="match status" value="1"/>
</dbReference>
<dbReference type="Pfam" id="PF00401">
    <property type="entry name" value="ATP-synt_DE"/>
    <property type="match status" value="1"/>
</dbReference>
<dbReference type="Pfam" id="PF02823">
    <property type="entry name" value="ATP-synt_DE_N"/>
    <property type="match status" value="1"/>
</dbReference>
<dbReference type="SUPFAM" id="SSF46604">
    <property type="entry name" value="Epsilon subunit of F1F0-ATP synthase C-terminal domain"/>
    <property type="match status" value="1"/>
</dbReference>
<dbReference type="SUPFAM" id="SSF51344">
    <property type="entry name" value="Epsilon subunit of F1F0-ATP synthase N-terminal domain"/>
    <property type="match status" value="1"/>
</dbReference>
<feature type="chain" id="PRO_1000056493" description="ATP synthase epsilon chain">
    <location>
        <begin position="1"/>
        <end position="139"/>
    </location>
</feature>
<name>ATPE_LEVBA</name>
<protein>
    <recommendedName>
        <fullName evidence="1">ATP synthase epsilon chain</fullName>
    </recommendedName>
    <alternativeName>
        <fullName evidence="1">ATP synthase F1 sector epsilon subunit</fullName>
    </alternativeName>
    <alternativeName>
        <fullName evidence="1">F-ATPase epsilon subunit</fullName>
    </alternativeName>
</protein>
<comment type="function">
    <text evidence="1">Produces ATP from ADP in the presence of a proton gradient across the membrane.</text>
</comment>
<comment type="subunit">
    <text evidence="1">F-type ATPases have 2 components, CF(1) - the catalytic core - and CF(0) - the membrane proton channel. CF(1) has five subunits: alpha(3), beta(3), gamma(1), delta(1), epsilon(1). CF(0) has three main subunits: a, b and c.</text>
</comment>
<comment type="subcellular location">
    <subcellularLocation>
        <location evidence="1">Cell membrane</location>
        <topology evidence="1">Peripheral membrane protein</topology>
    </subcellularLocation>
</comment>
<comment type="similarity">
    <text evidence="1">Belongs to the ATPase epsilon chain family.</text>
</comment>